<gene>
    <name evidence="1" type="primary">arnD</name>
    <name type="ordered locus">PSPA7_1590</name>
</gene>
<comment type="function">
    <text evidence="1">Catalyzes the deformylation of 4-deoxy-4-formamido-L-arabinose-phosphoundecaprenol to 4-amino-4-deoxy-L-arabinose-phosphoundecaprenol. The modified arabinose is attached to lipid A and is required for resistance to polymyxin and cationic antimicrobial peptides.</text>
</comment>
<comment type="catalytic activity">
    <reaction evidence="1">
        <text>4-deoxy-4-formamido-alpha-L-arabinopyranosyl di-trans,octa-cis-undecaprenyl phosphate + H2O = 4-amino-4-deoxy-alpha-L-arabinopyranosyl di-trans,octa-cis-undecaprenyl phosphate + formate</text>
        <dbReference type="Rhea" id="RHEA:27734"/>
        <dbReference type="ChEBI" id="CHEBI:15377"/>
        <dbReference type="ChEBI" id="CHEBI:15740"/>
        <dbReference type="ChEBI" id="CHEBI:58909"/>
        <dbReference type="ChEBI" id="CHEBI:60463"/>
        <dbReference type="EC" id="3.5.1.n3"/>
    </reaction>
</comment>
<comment type="pathway">
    <text evidence="1">Glycolipid biosynthesis; 4-amino-4-deoxy-alpha-L-arabinose undecaprenyl phosphate biosynthesis; 4-amino-4-deoxy-alpha-L-arabinose undecaprenyl phosphate from UDP-4-deoxy-4-formamido-beta-L-arabinose and undecaprenyl phosphate: step 2/2.</text>
</comment>
<comment type="pathway">
    <text evidence="1">Bacterial outer membrane biogenesis; lipopolysaccharide biosynthesis.</text>
</comment>
<comment type="similarity">
    <text evidence="1">Belongs to the polysaccharide deacetylase family. ArnD deformylase subfamily.</text>
</comment>
<reference key="1">
    <citation type="submission" date="2007-06" db="EMBL/GenBank/DDBJ databases">
        <authorList>
            <person name="Dodson R.J."/>
            <person name="Harkins D."/>
            <person name="Paulsen I.T."/>
        </authorList>
    </citation>
    <scope>NUCLEOTIDE SEQUENCE [LARGE SCALE GENOMIC DNA]</scope>
    <source>
        <strain>DSM 24068 / PA7</strain>
    </source>
</reference>
<feature type="chain" id="PRO_0000383521" description="Probable 4-deoxy-4-formamido-L-arabinose-phosphoundecaprenol deformylase ArnD">
    <location>
        <begin position="1"/>
        <end position="295"/>
    </location>
</feature>
<feature type="domain" description="NodB homology" evidence="1">
    <location>
        <begin position="2"/>
        <end position="260"/>
    </location>
</feature>
<sequence length="295" mass="32844">MIQAGLRIDVDTFRGTRDGVPRLLDLLDEAGLKATFFFSVGPDNMGRHLWRLARPAFLWKMLRSRAASLYGWDILLAGTAWPGKPIGRELGPLMRRTQAAGHEVGLHAWDHHAWQTHAGVWSAQQLGEQIRRGSDCLADILGQPVRCSAAAGWRADGRVVEAKQPFGFRYNSDCRGRGAFRPRLADGSPGIPQVPVNLPTFDEVVGPGLPREAYNDFILERFAAGRDNVYTIHAEVEGLLLAPAFRELLRRAERRGIRFRPLGELLPDDPRSLPLAELVRGRLAGREGWLGVRQP</sequence>
<organism>
    <name type="scientific">Pseudomonas paraeruginosa (strain DSM 24068 / PA7)</name>
    <name type="common">Pseudomonas aeruginosa (strain PA7)</name>
    <dbReference type="NCBI Taxonomy" id="381754"/>
    <lineage>
        <taxon>Bacteria</taxon>
        <taxon>Pseudomonadati</taxon>
        <taxon>Pseudomonadota</taxon>
        <taxon>Gammaproteobacteria</taxon>
        <taxon>Pseudomonadales</taxon>
        <taxon>Pseudomonadaceae</taxon>
        <taxon>Pseudomonas</taxon>
        <taxon>Pseudomonas paraeruginosa</taxon>
    </lineage>
</organism>
<accession>A6V1N9</accession>
<name>ARND_PSEP7</name>
<dbReference type="EC" id="3.5.1.n3" evidence="1"/>
<dbReference type="EMBL" id="CP000744">
    <property type="protein sequence ID" value="ABR81600.1"/>
    <property type="molecule type" value="Genomic_DNA"/>
</dbReference>
<dbReference type="RefSeq" id="WP_012074757.1">
    <property type="nucleotide sequence ID" value="NC_009656.1"/>
</dbReference>
<dbReference type="SMR" id="A6V1N9"/>
<dbReference type="KEGG" id="pap:PSPA7_1590"/>
<dbReference type="HOGENOM" id="CLU_084199_0_0_6"/>
<dbReference type="UniPathway" id="UPA00030"/>
<dbReference type="UniPathway" id="UPA00036">
    <property type="reaction ID" value="UER00496"/>
</dbReference>
<dbReference type="Proteomes" id="UP000001582">
    <property type="component" value="Chromosome"/>
</dbReference>
<dbReference type="GO" id="GO:0016020">
    <property type="term" value="C:membrane"/>
    <property type="evidence" value="ECO:0007669"/>
    <property type="project" value="GOC"/>
</dbReference>
<dbReference type="GO" id="GO:0016811">
    <property type="term" value="F:hydrolase activity, acting on carbon-nitrogen (but not peptide) bonds, in linear amides"/>
    <property type="evidence" value="ECO:0007669"/>
    <property type="project" value="UniProtKB-UniRule"/>
</dbReference>
<dbReference type="GO" id="GO:0036108">
    <property type="term" value="P:4-amino-4-deoxy-alpha-L-arabinopyranosyl undecaprenyl phosphate biosynthetic process"/>
    <property type="evidence" value="ECO:0007669"/>
    <property type="project" value="UniProtKB-UniRule"/>
</dbReference>
<dbReference type="GO" id="GO:0009245">
    <property type="term" value="P:lipid A biosynthetic process"/>
    <property type="evidence" value="ECO:0007669"/>
    <property type="project" value="UniProtKB-UniRule"/>
</dbReference>
<dbReference type="GO" id="GO:0009103">
    <property type="term" value="P:lipopolysaccharide biosynthetic process"/>
    <property type="evidence" value="ECO:0007669"/>
    <property type="project" value="UniProtKB-UniRule"/>
</dbReference>
<dbReference type="GO" id="GO:0046677">
    <property type="term" value="P:response to antibiotic"/>
    <property type="evidence" value="ECO:0007669"/>
    <property type="project" value="UniProtKB-KW"/>
</dbReference>
<dbReference type="Gene3D" id="3.20.20.370">
    <property type="entry name" value="Glycoside hydrolase/deacetylase"/>
    <property type="match status" value="1"/>
</dbReference>
<dbReference type="HAMAP" id="MF_01870">
    <property type="entry name" value="ArnD"/>
    <property type="match status" value="1"/>
</dbReference>
<dbReference type="InterPro" id="IPR023557">
    <property type="entry name" value="ArnD"/>
</dbReference>
<dbReference type="InterPro" id="IPR011330">
    <property type="entry name" value="Glyco_hydro/deAcase_b/a-brl"/>
</dbReference>
<dbReference type="InterPro" id="IPR002509">
    <property type="entry name" value="NODB_dom"/>
</dbReference>
<dbReference type="InterPro" id="IPR050248">
    <property type="entry name" value="Polysacc_deacetylase_ArnD"/>
</dbReference>
<dbReference type="NCBIfam" id="NF011923">
    <property type="entry name" value="PRK15394.1"/>
    <property type="match status" value="1"/>
</dbReference>
<dbReference type="PANTHER" id="PTHR10587:SF137">
    <property type="entry name" value="4-DEOXY-4-FORMAMIDO-L-ARABINOSE-PHOSPHOUNDECAPRENOL DEFORMYLASE ARND-RELATED"/>
    <property type="match status" value="1"/>
</dbReference>
<dbReference type="PANTHER" id="PTHR10587">
    <property type="entry name" value="GLYCOSYL TRANSFERASE-RELATED"/>
    <property type="match status" value="1"/>
</dbReference>
<dbReference type="Pfam" id="PF01522">
    <property type="entry name" value="Polysacc_deac_1"/>
    <property type="match status" value="1"/>
</dbReference>
<dbReference type="SUPFAM" id="SSF88713">
    <property type="entry name" value="Glycoside hydrolase/deacetylase"/>
    <property type="match status" value="1"/>
</dbReference>
<dbReference type="PROSITE" id="PS51677">
    <property type="entry name" value="NODB"/>
    <property type="match status" value="1"/>
</dbReference>
<proteinExistence type="inferred from homology"/>
<evidence type="ECO:0000255" key="1">
    <source>
        <dbReference type="HAMAP-Rule" id="MF_01870"/>
    </source>
</evidence>
<protein>
    <recommendedName>
        <fullName evidence="1">Probable 4-deoxy-4-formamido-L-arabinose-phosphoundecaprenol deformylase ArnD</fullName>
        <ecNumber evidence="1">3.5.1.n3</ecNumber>
    </recommendedName>
</protein>
<keyword id="KW-0046">Antibiotic resistance</keyword>
<keyword id="KW-0378">Hydrolase</keyword>
<keyword id="KW-0441">Lipid A biosynthesis</keyword>
<keyword id="KW-0444">Lipid biosynthesis</keyword>
<keyword id="KW-0443">Lipid metabolism</keyword>
<keyword id="KW-0448">Lipopolysaccharide biosynthesis</keyword>